<keyword id="KW-0964">Secreted</keyword>
<keyword id="KW-0732">Signal</keyword>
<keyword id="KW-0346">Stress response</keyword>
<accession>P0CU40</accession>
<proteinExistence type="evidence at transcript level"/>
<feature type="signal peptide" evidence="1">
    <location>
        <begin position="1"/>
        <end position="19"/>
    </location>
</feature>
<feature type="chain" id="PRO_0000440184" description="Secretory-abundant heat soluble protein 53582" evidence="1">
    <location>
        <begin position="20"/>
        <end position="163"/>
    </location>
</feature>
<feature type="region of interest" description="SAHS-c1" evidence="6">
    <location>
        <begin position="22"/>
        <end position="51"/>
    </location>
</feature>
<feature type="region of interest" description="SAHS-c2" evidence="6">
    <location>
        <begin position="67"/>
        <end position="95"/>
    </location>
</feature>
<feature type="region of interest" description="SAHS-c3" evidence="6">
    <location>
        <begin position="108"/>
        <end position="157"/>
    </location>
</feature>
<comment type="function">
    <text evidence="2">Secreted heat soluble protein acting as a molecular shield in water-deficient condition (PubMed:28306513). Tardigrade-specific intrinsically disordered proteins (TDPs) are essential for desiccation tolerance by forming non-crystalline amorphous solids upon desiccation, and this vitrified state mirrors their protective capabilities (PubMed:28306513).</text>
</comment>
<comment type="subcellular location">
    <subcellularLocation>
        <location evidence="7">Secreted</location>
    </subcellularLocation>
</comment>
<comment type="induction">
    <text evidence="2">Expression is highly induced during desiccation (PubMed:28306513).</text>
</comment>
<comment type="domain">
    <text evidence="6">SAHS-c1, SAHS-c2 and SAHS-c3 are 3 highly conserved regions within the SAHS protein family (PubMed:22937162).</text>
</comment>
<comment type="disruption phenotype">
    <text evidence="2">Affects slightly survival under dry conditions but does not affect survival under frozen conditions (PubMed:28306513).</text>
</comment>
<comment type="miscellaneous">
    <text evidence="2">Trehalose, a disaccharide essential for several organisms to survive drying, is detected at low levels or not at all in some tardigrade species, indicating that tardigrades possess potentially novel mechanisms for surviving desiccation involving tardigrade-specific intrinsically disordered proteins (TDPs) (PubMed:28306513).</text>
</comment>
<comment type="similarity">
    <text evidence="5">Belongs to the Secretory-abundant heat soluble protein (SAHS) family.</text>
</comment>
<sequence length="163" mass="18483">MARLFVAVALFGVVAFAAAEKEWTGKTWLGSWASTDRAENWEAFVDALGLPSDQYPREVQRTIHTIYKQGDKYHHEVSIPSKNFKKAIEYTLGTETDVQHGPHTIKLKYTEDGEKLVADVQIPSKNKQIHDIYEVQGDTLTKTYKVGDVVAKRWFTREANPTA</sequence>
<reference key="1">
    <citation type="journal article" date="2012" name="PLoS ONE">
        <title>Two novel heat-soluble protein families abundantly expressed in an anhydrobiotic tardigrade.</title>
        <authorList>
            <person name="Yamaguchi A."/>
            <person name="Tanaka S."/>
            <person name="Yamaguchi S."/>
            <person name="Kuwahara H."/>
            <person name="Takamura C."/>
            <person name="Imajoh-Ohmi S."/>
            <person name="Horikawa D.D."/>
            <person name="Toyoda A."/>
            <person name="Katayama T."/>
            <person name="Arakawa K."/>
            <person name="Fujiyama A."/>
            <person name="Kubo T."/>
            <person name="Kunieda T."/>
        </authorList>
    </citation>
    <scope>DOMAIN</scope>
</reference>
<reference key="2">
    <citation type="journal article" date="2017" name="Mol. Cell">
        <title>Tardigrades use intrinsically disordered proteins to survive desiccation.</title>
        <authorList>
            <person name="Boothby T.C."/>
            <person name="Tapia H."/>
            <person name="Brozena A.H."/>
            <person name="Piszkiewicz S."/>
            <person name="Smith A.E."/>
            <person name="Giovannini I."/>
            <person name="Rebecchi L."/>
            <person name="Pielak G.J."/>
            <person name="Koshland D."/>
            <person name="Goldstein B."/>
        </authorList>
    </citation>
    <scope>FUNCTION</scope>
    <scope>INDUCTION</scope>
    <scope>DISRUPTION PHENOTYPE</scope>
</reference>
<name>SAHS2_HYPEX</name>
<dbReference type="SMR" id="P0CU40"/>
<dbReference type="OrthoDB" id="9971011at2759"/>
<dbReference type="GO" id="GO:0005576">
    <property type="term" value="C:extracellular region"/>
    <property type="evidence" value="ECO:0007669"/>
    <property type="project" value="UniProtKB-SubCell"/>
</dbReference>
<dbReference type="CDD" id="cd00742">
    <property type="entry name" value="FABP"/>
    <property type="match status" value="1"/>
</dbReference>
<dbReference type="Gene3D" id="2.40.128.20">
    <property type="match status" value="1"/>
</dbReference>
<dbReference type="InterPro" id="IPR012674">
    <property type="entry name" value="Calycin"/>
</dbReference>
<dbReference type="SUPFAM" id="SSF50814">
    <property type="entry name" value="Lipocalins"/>
    <property type="match status" value="1"/>
</dbReference>
<gene>
    <name evidence="4" type="primary">SAHS 53582</name>
    <name evidence="3" type="synonym">SAHS-b</name>
</gene>
<protein>
    <recommendedName>
        <fullName evidence="4">Secretory-abundant heat soluble protein 53582</fullName>
        <shortName evidence="4">SAHS 53582</shortName>
    </recommendedName>
    <alternativeName>
        <fullName evidence="3">Secretory-abundant heat soluble protein b</fullName>
        <shortName evidence="3">SAHS-b</shortName>
    </alternativeName>
    <alternativeName>
        <fullName evidence="4">Tardigrade-specific intrinsically disordered protein SAHS 53582</fullName>
        <shortName evidence="4">TDP SAHS 53582</shortName>
    </alternativeName>
</protein>
<evidence type="ECO:0000255" key="1"/>
<evidence type="ECO:0000269" key="2">
    <source>
    </source>
</evidence>
<evidence type="ECO:0000303" key="3">
    <source>
    </source>
</evidence>
<evidence type="ECO:0000303" key="4">
    <source>
    </source>
</evidence>
<evidence type="ECO:0000305" key="5"/>
<evidence type="ECO:0000305" key="6">
    <source>
    </source>
</evidence>
<evidence type="ECO:0000305" key="7">
    <source>
    </source>
</evidence>
<organism evidence="4">
    <name type="scientific">Hypsibius exemplaris</name>
    <name type="common">Freshwater tardigrade</name>
    <dbReference type="NCBI Taxonomy" id="2072580"/>
    <lineage>
        <taxon>Eukaryota</taxon>
        <taxon>Metazoa</taxon>
        <taxon>Ecdysozoa</taxon>
        <taxon>Tardigrada</taxon>
        <taxon>Eutardigrada</taxon>
        <taxon>Parachela</taxon>
        <taxon>Hypsibioidea</taxon>
        <taxon>Hypsibiidae</taxon>
        <taxon>Hypsibius</taxon>
    </lineage>
</organism>